<comment type="function">
    <text evidence="1">Catalyzes the attachment of serine to tRNA(Ser). Is also able to aminoacylate tRNA(Sec) with serine, to form the misacylated tRNA L-seryl-tRNA(Sec), which will be further converted into selenocysteinyl-tRNA(Sec).</text>
</comment>
<comment type="catalytic activity">
    <reaction evidence="1">
        <text>tRNA(Ser) + L-serine + ATP = L-seryl-tRNA(Ser) + AMP + diphosphate + H(+)</text>
        <dbReference type="Rhea" id="RHEA:12292"/>
        <dbReference type="Rhea" id="RHEA-COMP:9669"/>
        <dbReference type="Rhea" id="RHEA-COMP:9703"/>
        <dbReference type="ChEBI" id="CHEBI:15378"/>
        <dbReference type="ChEBI" id="CHEBI:30616"/>
        <dbReference type="ChEBI" id="CHEBI:33019"/>
        <dbReference type="ChEBI" id="CHEBI:33384"/>
        <dbReference type="ChEBI" id="CHEBI:78442"/>
        <dbReference type="ChEBI" id="CHEBI:78533"/>
        <dbReference type="ChEBI" id="CHEBI:456215"/>
        <dbReference type="EC" id="6.1.1.11"/>
    </reaction>
</comment>
<comment type="catalytic activity">
    <reaction evidence="1">
        <text>tRNA(Sec) + L-serine + ATP = L-seryl-tRNA(Sec) + AMP + diphosphate + H(+)</text>
        <dbReference type="Rhea" id="RHEA:42580"/>
        <dbReference type="Rhea" id="RHEA-COMP:9742"/>
        <dbReference type="Rhea" id="RHEA-COMP:10128"/>
        <dbReference type="ChEBI" id="CHEBI:15378"/>
        <dbReference type="ChEBI" id="CHEBI:30616"/>
        <dbReference type="ChEBI" id="CHEBI:33019"/>
        <dbReference type="ChEBI" id="CHEBI:33384"/>
        <dbReference type="ChEBI" id="CHEBI:78442"/>
        <dbReference type="ChEBI" id="CHEBI:78533"/>
        <dbReference type="ChEBI" id="CHEBI:456215"/>
        <dbReference type="EC" id="6.1.1.11"/>
    </reaction>
</comment>
<comment type="pathway">
    <text evidence="1">Aminoacyl-tRNA biosynthesis; selenocysteinyl-tRNA(Sec) biosynthesis; L-seryl-tRNA(Sec) from L-serine and tRNA(Sec): step 1/1.</text>
</comment>
<comment type="subunit">
    <text evidence="1">Homodimer. The tRNA molecule binds across the dimer.</text>
</comment>
<comment type="subcellular location">
    <subcellularLocation>
        <location evidence="1">Cytoplasm</location>
    </subcellularLocation>
</comment>
<comment type="domain">
    <text evidence="1">Consists of two distinct domains, a catalytic core and a N-terminal extension that is involved in tRNA binding.</text>
</comment>
<comment type="similarity">
    <text evidence="1">Belongs to the class-II aminoacyl-tRNA synthetase family. Type-1 seryl-tRNA synthetase subfamily.</text>
</comment>
<reference key="1">
    <citation type="journal article" date="2008" name="Appl. Environ. Microbiol.">
        <title>Genome of the epsilonproteobacterial chemolithoautotroph Sulfurimonas denitrificans.</title>
        <authorList>
            <person name="Sievert S.M."/>
            <person name="Scott K.M."/>
            <person name="Klotz M.G."/>
            <person name="Chain P.S.G."/>
            <person name="Hauser L.J."/>
            <person name="Hemp J."/>
            <person name="Huegler M."/>
            <person name="Land M."/>
            <person name="Lapidus A."/>
            <person name="Larimer F.W."/>
            <person name="Lucas S."/>
            <person name="Malfatti S.A."/>
            <person name="Meyer F."/>
            <person name="Paulsen I.T."/>
            <person name="Ren Q."/>
            <person name="Simon J."/>
            <person name="Bailey K."/>
            <person name="Diaz E."/>
            <person name="Fitzpatrick K.A."/>
            <person name="Glover B."/>
            <person name="Gwatney N."/>
            <person name="Korajkic A."/>
            <person name="Long A."/>
            <person name="Mobberley J.M."/>
            <person name="Pantry S.N."/>
            <person name="Pazder G."/>
            <person name="Peterson S."/>
            <person name="Quintanilla J.D."/>
            <person name="Sprinkle R."/>
            <person name="Stephens J."/>
            <person name="Thomas P."/>
            <person name="Vaughn R."/>
            <person name="Weber M.J."/>
            <person name="Wooten L.L."/>
        </authorList>
    </citation>
    <scope>NUCLEOTIDE SEQUENCE [LARGE SCALE GENOMIC DNA]</scope>
    <source>
        <strain>ATCC 33889 / DSM 1251</strain>
    </source>
</reference>
<dbReference type="EC" id="6.1.1.11" evidence="1"/>
<dbReference type="EMBL" id="CP000153">
    <property type="protein sequence ID" value="ABB44944.1"/>
    <property type="molecule type" value="Genomic_DNA"/>
</dbReference>
<dbReference type="RefSeq" id="WP_011373285.1">
    <property type="nucleotide sequence ID" value="NC_007575.1"/>
</dbReference>
<dbReference type="SMR" id="Q30PY7"/>
<dbReference type="STRING" id="326298.Suden_1667"/>
<dbReference type="KEGG" id="tdn:Suden_1667"/>
<dbReference type="eggNOG" id="COG0172">
    <property type="taxonomic scope" value="Bacteria"/>
</dbReference>
<dbReference type="HOGENOM" id="CLU_023797_1_1_7"/>
<dbReference type="OrthoDB" id="9804647at2"/>
<dbReference type="UniPathway" id="UPA00906">
    <property type="reaction ID" value="UER00895"/>
</dbReference>
<dbReference type="Proteomes" id="UP000002714">
    <property type="component" value="Chromosome"/>
</dbReference>
<dbReference type="GO" id="GO:0005737">
    <property type="term" value="C:cytoplasm"/>
    <property type="evidence" value="ECO:0007669"/>
    <property type="project" value="UniProtKB-SubCell"/>
</dbReference>
<dbReference type="GO" id="GO:0005524">
    <property type="term" value="F:ATP binding"/>
    <property type="evidence" value="ECO:0007669"/>
    <property type="project" value="UniProtKB-UniRule"/>
</dbReference>
<dbReference type="GO" id="GO:0004828">
    <property type="term" value="F:serine-tRNA ligase activity"/>
    <property type="evidence" value="ECO:0007669"/>
    <property type="project" value="UniProtKB-UniRule"/>
</dbReference>
<dbReference type="GO" id="GO:0016260">
    <property type="term" value="P:selenocysteine biosynthetic process"/>
    <property type="evidence" value="ECO:0007669"/>
    <property type="project" value="UniProtKB-UniRule"/>
</dbReference>
<dbReference type="GO" id="GO:0006434">
    <property type="term" value="P:seryl-tRNA aminoacylation"/>
    <property type="evidence" value="ECO:0007669"/>
    <property type="project" value="UniProtKB-UniRule"/>
</dbReference>
<dbReference type="CDD" id="cd00770">
    <property type="entry name" value="SerRS_core"/>
    <property type="match status" value="1"/>
</dbReference>
<dbReference type="Gene3D" id="3.30.930.10">
    <property type="entry name" value="Bira Bifunctional Protein, Domain 2"/>
    <property type="match status" value="1"/>
</dbReference>
<dbReference type="Gene3D" id="1.10.287.40">
    <property type="entry name" value="Serine-tRNA synthetase, tRNA binding domain"/>
    <property type="match status" value="1"/>
</dbReference>
<dbReference type="HAMAP" id="MF_00176">
    <property type="entry name" value="Ser_tRNA_synth_type1"/>
    <property type="match status" value="1"/>
</dbReference>
<dbReference type="InterPro" id="IPR002314">
    <property type="entry name" value="aa-tRNA-synt_IIb"/>
</dbReference>
<dbReference type="InterPro" id="IPR006195">
    <property type="entry name" value="aa-tRNA-synth_II"/>
</dbReference>
<dbReference type="InterPro" id="IPR045864">
    <property type="entry name" value="aa-tRNA-synth_II/BPL/LPL"/>
</dbReference>
<dbReference type="InterPro" id="IPR002317">
    <property type="entry name" value="Ser-tRNA-ligase_type_1"/>
</dbReference>
<dbReference type="InterPro" id="IPR015866">
    <property type="entry name" value="Ser-tRNA-synth_1_N"/>
</dbReference>
<dbReference type="InterPro" id="IPR042103">
    <property type="entry name" value="SerRS_1_N_sf"/>
</dbReference>
<dbReference type="InterPro" id="IPR033729">
    <property type="entry name" value="SerRS_core"/>
</dbReference>
<dbReference type="InterPro" id="IPR010978">
    <property type="entry name" value="tRNA-bd_arm"/>
</dbReference>
<dbReference type="NCBIfam" id="TIGR00414">
    <property type="entry name" value="serS"/>
    <property type="match status" value="1"/>
</dbReference>
<dbReference type="PANTHER" id="PTHR43697:SF1">
    <property type="entry name" value="SERINE--TRNA LIGASE"/>
    <property type="match status" value="1"/>
</dbReference>
<dbReference type="PANTHER" id="PTHR43697">
    <property type="entry name" value="SERYL-TRNA SYNTHETASE"/>
    <property type="match status" value="1"/>
</dbReference>
<dbReference type="Pfam" id="PF02403">
    <property type="entry name" value="Seryl_tRNA_N"/>
    <property type="match status" value="1"/>
</dbReference>
<dbReference type="Pfam" id="PF00587">
    <property type="entry name" value="tRNA-synt_2b"/>
    <property type="match status" value="1"/>
</dbReference>
<dbReference type="PIRSF" id="PIRSF001529">
    <property type="entry name" value="Ser-tRNA-synth_IIa"/>
    <property type="match status" value="1"/>
</dbReference>
<dbReference type="PRINTS" id="PR00981">
    <property type="entry name" value="TRNASYNTHSER"/>
</dbReference>
<dbReference type="SUPFAM" id="SSF55681">
    <property type="entry name" value="Class II aaRS and biotin synthetases"/>
    <property type="match status" value="1"/>
</dbReference>
<dbReference type="SUPFAM" id="SSF46589">
    <property type="entry name" value="tRNA-binding arm"/>
    <property type="match status" value="1"/>
</dbReference>
<dbReference type="PROSITE" id="PS50862">
    <property type="entry name" value="AA_TRNA_LIGASE_II"/>
    <property type="match status" value="1"/>
</dbReference>
<name>SYS_SULDN</name>
<feature type="chain" id="PRO_1000019860" description="Serine--tRNA ligase">
    <location>
        <begin position="1"/>
        <end position="415"/>
    </location>
</feature>
<feature type="binding site" evidence="1">
    <location>
        <begin position="230"/>
        <end position="232"/>
    </location>
    <ligand>
        <name>L-serine</name>
        <dbReference type="ChEBI" id="CHEBI:33384"/>
    </ligand>
</feature>
<feature type="binding site" evidence="1">
    <location>
        <begin position="261"/>
        <end position="263"/>
    </location>
    <ligand>
        <name>ATP</name>
        <dbReference type="ChEBI" id="CHEBI:30616"/>
    </ligand>
</feature>
<feature type="binding site" evidence="1">
    <location>
        <position position="284"/>
    </location>
    <ligand>
        <name>L-serine</name>
        <dbReference type="ChEBI" id="CHEBI:33384"/>
    </ligand>
</feature>
<feature type="binding site" evidence="1">
    <location>
        <begin position="348"/>
        <end position="351"/>
    </location>
    <ligand>
        <name>ATP</name>
        <dbReference type="ChEBI" id="CHEBI:30616"/>
    </ligand>
</feature>
<feature type="binding site" evidence="1">
    <location>
        <position position="382"/>
    </location>
    <ligand>
        <name>L-serine</name>
        <dbReference type="ChEBI" id="CHEBI:33384"/>
    </ligand>
</feature>
<sequence length="415" mass="46761">MIDLKLLQKDFQTISNKLSRKGVDADLLENLKIRNEELKVAKVAYETLQAAQNSMSKDFGIYKKEGRDTTELKAKVDENKIKIAEALDTQRIKQEALEYLAMSIPNIPDDDVPDGKDENDNVEIKKVLTPKEFSFTPKEHWELAGQNGWIDFERGVKLATSRFSVSFGMGAKLERALINFMLNFNSKRGFEEVSVPSLVNRAALEGTGQLPKFEDDLYKIQGQELFLIPTAEVPVTNLYQDEILHVERLPIKMTAYTSCFRKEAGAAGRDTRGMIRQHQFHKVELVSITKPQQSDEIFDEMVQTASDLLSALELPHRLVRLCGGDLGFGAAKTVDLEVWLPGQNAYREISSVSNTREFQARRAKIRFKDGDKNSFVHTLNGSSLAVGRTLVAIMENFQNEDGSITIPKVLSPYLN</sequence>
<accession>Q30PY7</accession>
<proteinExistence type="inferred from homology"/>
<protein>
    <recommendedName>
        <fullName evidence="1">Serine--tRNA ligase</fullName>
        <ecNumber evidence="1">6.1.1.11</ecNumber>
    </recommendedName>
    <alternativeName>
        <fullName evidence="1">Seryl-tRNA synthetase</fullName>
        <shortName evidence="1">SerRS</shortName>
    </alternativeName>
    <alternativeName>
        <fullName evidence="1">Seryl-tRNA(Ser/Sec) synthetase</fullName>
    </alternativeName>
</protein>
<evidence type="ECO:0000255" key="1">
    <source>
        <dbReference type="HAMAP-Rule" id="MF_00176"/>
    </source>
</evidence>
<organism>
    <name type="scientific">Sulfurimonas denitrificans (strain ATCC 33889 / DSM 1251)</name>
    <name type="common">Thiomicrospira denitrificans (strain ATCC 33889 / DSM 1251)</name>
    <dbReference type="NCBI Taxonomy" id="326298"/>
    <lineage>
        <taxon>Bacteria</taxon>
        <taxon>Pseudomonadati</taxon>
        <taxon>Campylobacterota</taxon>
        <taxon>Epsilonproteobacteria</taxon>
        <taxon>Campylobacterales</taxon>
        <taxon>Sulfurimonadaceae</taxon>
        <taxon>Sulfurimonas</taxon>
    </lineage>
</organism>
<keyword id="KW-0030">Aminoacyl-tRNA synthetase</keyword>
<keyword id="KW-0067">ATP-binding</keyword>
<keyword id="KW-0963">Cytoplasm</keyword>
<keyword id="KW-0436">Ligase</keyword>
<keyword id="KW-0547">Nucleotide-binding</keyword>
<keyword id="KW-0648">Protein biosynthesis</keyword>
<keyword id="KW-1185">Reference proteome</keyword>
<gene>
    <name evidence="1" type="primary">serS</name>
    <name type="ordered locus">Suden_1667</name>
</gene>